<keyword id="KW-0053">Apoptosis</keyword>
<keyword id="KW-0256">Endoplasmic reticulum</keyword>
<keyword id="KW-0472">Membrane</keyword>
<keyword id="KW-0812">Transmembrane</keyword>
<keyword id="KW-1133">Transmembrane helix</keyword>
<gene>
    <name type="primary">DAD1</name>
    <name type="synonym">DAD</name>
</gene>
<feature type="chain" id="PRO_0000124021" description="Dolichyl-diphosphooligosaccharide--protein glycosyltransferase subunit DAD1">
    <location>
        <begin position="1"/>
        <end position="115"/>
    </location>
</feature>
<feature type="topological domain" description="Cytoplasmic" evidence="3">
    <location>
        <begin position="1"/>
        <end position="31"/>
    </location>
</feature>
<feature type="transmembrane region" description="Helical" evidence="3">
    <location>
        <begin position="32"/>
        <end position="52"/>
    </location>
</feature>
<feature type="topological domain" description="Lumenal" evidence="3">
    <location>
        <begin position="53"/>
        <end position="55"/>
    </location>
</feature>
<feature type="transmembrane region" description="Helical" evidence="3">
    <location>
        <begin position="56"/>
        <end position="76"/>
    </location>
</feature>
<feature type="topological domain" description="Cytoplasmic" evidence="3">
    <location>
        <begin position="77"/>
        <end position="94"/>
    </location>
</feature>
<feature type="transmembrane region" description="Helical" evidence="3">
    <location>
        <begin position="95"/>
        <end position="115"/>
    </location>
</feature>
<organism>
    <name type="scientific">Betula pendula</name>
    <name type="common">European white birch</name>
    <name type="synonym">Betula verrucosa</name>
    <dbReference type="NCBI Taxonomy" id="3505"/>
    <lineage>
        <taxon>Eukaryota</taxon>
        <taxon>Viridiplantae</taxon>
        <taxon>Streptophyta</taxon>
        <taxon>Embryophyta</taxon>
        <taxon>Tracheophyta</taxon>
        <taxon>Spermatophyta</taxon>
        <taxon>Magnoliopsida</taxon>
        <taxon>eudicotyledons</taxon>
        <taxon>Gunneridae</taxon>
        <taxon>Pentapetalae</taxon>
        <taxon>rosids</taxon>
        <taxon>fabids</taxon>
        <taxon>Fagales</taxon>
        <taxon>Betulaceae</taxon>
        <taxon>Betula</taxon>
    </lineage>
</organism>
<proteinExistence type="inferred from homology"/>
<name>DAD1_BETPN</name>
<reference key="1">
    <citation type="submission" date="2000-01" db="EMBL/GenBank/DDBJ databases">
        <authorList>
            <person name="Korhonen M.S."/>
            <person name="Palva T.E."/>
            <person name="Kangasjarvi J."/>
        </authorList>
    </citation>
    <scope>NUCLEOTIDE SEQUENCE [MRNA]</scope>
    <source>
        <tissue>Leaf</tissue>
    </source>
</reference>
<evidence type="ECO:0000250" key="1"/>
<evidence type="ECO:0000250" key="2">
    <source>
        <dbReference type="UniProtKB" id="P46964"/>
    </source>
</evidence>
<evidence type="ECO:0000255" key="3"/>
<evidence type="ECO:0000305" key="4"/>
<accession>Q9M3T9</accession>
<dbReference type="EMBL" id="AJ279687">
    <property type="protein sequence ID" value="CAB66329.1"/>
    <property type="molecule type" value="mRNA"/>
</dbReference>
<dbReference type="SMR" id="Q9M3T9"/>
<dbReference type="UniPathway" id="UPA00378"/>
<dbReference type="GO" id="GO:0008250">
    <property type="term" value="C:oligosaccharyltransferase complex"/>
    <property type="evidence" value="ECO:0007669"/>
    <property type="project" value="InterPro"/>
</dbReference>
<dbReference type="GO" id="GO:0006487">
    <property type="term" value="P:protein N-linked glycosylation"/>
    <property type="evidence" value="ECO:0007669"/>
    <property type="project" value="TreeGrafter"/>
</dbReference>
<dbReference type="InterPro" id="IPR003038">
    <property type="entry name" value="DAD/Ost2"/>
</dbReference>
<dbReference type="PANTHER" id="PTHR10705">
    <property type="entry name" value="DOLICHYL-DIPHOSPHOOLIGOSACCHARIDE--PROTEIN GLYCOSYLTRANSFERASE SUBUNIT DAD1"/>
    <property type="match status" value="1"/>
</dbReference>
<dbReference type="PANTHER" id="PTHR10705:SF0">
    <property type="entry name" value="DOLICHYL-DIPHOSPHOOLIGOSACCHARIDE--PROTEIN GLYCOSYLTRANSFERASE SUBUNIT DAD1"/>
    <property type="match status" value="1"/>
</dbReference>
<dbReference type="Pfam" id="PF02109">
    <property type="entry name" value="DAD"/>
    <property type="match status" value="1"/>
</dbReference>
<dbReference type="PIRSF" id="PIRSF005588">
    <property type="entry name" value="DAD"/>
    <property type="match status" value="1"/>
</dbReference>
<sequence>MARSTSKDAQALIQSLRSAYAATPSNLKIIDLYVVFAVFTALIQVVYMAIVGSFPFNAFLSGLLSCIGTAVLAVCLRIQVNKENKEFKDLAPERAFADFVLCNLVLHLVIMNFLG</sequence>
<comment type="function">
    <text evidence="2">Subunit of the oligosaccharyl transferase (OST) complex that catalyzes the initial transfer of a defined glycan (Glc(3)Man(9)GlcNAc(2) in eukaryotes) from the lipid carrier dolichol-pyrophosphate to an asparagine residue within an Asn-X-Ser/Thr consensus motif in nascent polypeptide chains, the first step in protein N-glycosylation. N-glycosylation occurs cotranslationally and the complex associates with the Sec61 complex at the channel-forming translocon complex that mediates protein translocation across the endoplasmic reticulum (ER). All subunits are required for a maximal enzyme activity.</text>
</comment>
<comment type="pathway">
    <text>Protein modification; protein glycosylation.</text>
</comment>
<comment type="subunit">
    <text evidence="2">Component of the oligosaccharyltransferase (OST) complex.</text>
</comment>
<comment type="subcellular location">
    <subcellularLocation>
        <location evidence="1">Endoplasmic reticulum membrane</location>
        <topology evidence="1">Multi-pass membrane protein</topology>
    </subcellularLocation>
</comment>
<comment type="similarity">
    <text evidence="4">Belongs to the DAD/OST2 family.</text>
</comment>
<protein>
    <recommendedName>
        <fullName>Dolichyl-diphosphooligosaccharide--protein glycosyltransferase subunit DAD1</fullName>
        <shortName>Oligosaccharyl transferase subunit DAD1</shortName>
    </recommendedName>
    <alternativeName>
        <fullName>Defender against cell death 1</fullName>
        <shortName>DAD-1</shortName>
    </alternativeName>
</protein>